<gene>
    <name evidence="1" type="primary">rplK</name>
    <name evidence="1" type="synonym">rpl11</name>
    <name type="ordered locus">PCC7424_1020</name>
</gene>
<protein>
    <recommendedName>
        <fullName evidence="1">Large ribosomal subunit protein uL11</fullName>
    </recommendedName>
    <alternativeName>
        <fullName evidence="2">50S ribosomal protein L11</fullName>
    </alternativeName>
</protein>
<comment type="function">
    <text evidence="1">Forms part of the ribosomal stalk which helps the ribosome interact with GTP-bound translation factors.</text>
</comment>
<comment type="subunit">
    <text evidence="1">Part of the ribosomal stalk of the 50S ribosomal subunit. Interacts with L10 and the large rRNA to form the base of the stalk. L10 forms an elongated spine to which L12 dimers bind in a sequential fashion forming a multimeric L10(L12)X complex.</text>
</comment>
<comment type="PTM">
    <text evidence="1">One or more lysine residues are methylated.</text>
</comment>
<comment type="similarity">
    <text evidence="1">Belongs to the universal ribosomal protein uL11 family.</text>
</comment>
<organism>
    <name type="scientific">Gloeothece citriformis (strain PCC 7424)</name>
    <name type="common">Cyanothece sp. (strain PCC 7424)</name>
    <dbReference type="NCBI Taxonomy" id="65393"/>
    <lineage>
        <taxon>Bacteria</taxon>
        <taxon>Bacillati</taxon>
        <taxon>Cyanobacteriota</taxon>
        <taxon>Cyanophyceae</taxon>
        <taxon>Oscillatoriophycideae</taxon>
        <taxon>Chroococcales</taxon>
        <taxon>Aphanothecaceae</taxon>
        <taxon>Gloeothece</taxon>
        <taxon>Gloeothece citriformis</taxon>
    </lineage>
</organism>
<reference key="1">
    <citation type="journal article" date="2011" name="MBio">
        <title>Novel metabolic attributes of the genus Cyanothece, comprising a group of unicellular nitrogen-fixing Cyanobacteria.</title>
        <authorList>
            <person name="Bandyopadhyay A."/>
            <person name="Elvitigala T."/>
            <person name="Welsh E."/>
            <person name="Stockel J."/>
            <person name="Liberton M."/>
            <person name="Min H."/>
            <person name="Sherman L.A."/>
            <person name="Pakrasi H.B."/>
        </authorList>
    </citation>
    <scope>NUCLEOTIDE SEQUENCE [LARGE SCALE GENOMIC DNA]</scope>
    <source>
        <strain>PCC 7424</strain>
    </source>
</reference>
<proteinExistence type="inferred from homology"/>
<name>RL11_GLOC7</name>
<evidence type="ECO:0000255" key="1">
    <source>
        <dbReference type="HAMAP-Rule" id="MF_00736"/>
    </source>
</evidence>
<evidence type="ECO:0000305" key="2"/>
<dbReference type="EMBL" id="CP001291">
    <property type="protein sequence ID" value="ACK69474.1"/>
    <property type="molecule type" value="Genomic_DNA"/>
</dbReference>
<dbReference type="RefSeq" id="WP_012598421.1">
    <property type="nucleotide sequence ID" value="NC_011729.1"/>
</dbReference>
<dbReference type="SMR" id="B7KJM5"/>
<dbReference type="STRING" id="65393.PCC7424_1020"/>
<dbReference type="KEGG" id="cyc:PCC7424_1020"/>
<dbReference type="eggNOG" id="COG0080">
    <property type="taxonomic scope" value="Bacteria"/>
</dbReference>
<dbReference type="HOGENOM" id="CLU_074237_2_2_3"/>
<dbReference type="OrthoDB" id="9802408at2"/>
<dbReference type="Proteomes" id="UP000002384">
    <property type="component" value="Chromosome"/>
</dbReference>
<dbReference type="GO" id="GO:0022625">
    <property type="term" value="C:cytosolic large ribosomal subunit"/>
    <property type="evidence" value="ECO:0007669"/>
    <property type="project" value="TreeGrafter"/>
</dbReference>
<dbReference type="GO" id="GO:0070180">
    <property type="term" value="F:large ribosomal subunit rRNA binding"/>
    <property type="evidence" value="ECO:0007669"/>
    <property type="project" value="UniProtKB-UniRule"/>
</dbReference>
<dbReference type="GO" id="GO:0003735">
    <property type="term" value="F:structural constituent of ribosome"/>
    <property type="evidence" value="ECO:0007669"/>
    <property type="project" value="InterPro"/>
</dbReference>
<dbReference type="GO" id="GO:0006412">
    <property type="term" value="P:translation"/>
    <property type="evidence" value="ECO:0007669"/>
    <property type="project" value="UniProtKB-UniRule"/>
</dbReference>
<dbReference type="CDD" id="cd00349">
    <property type="entry name" value="Ribosomal_L11"/>
    <property type="match status" value="1"/>
</dbReference>
<dbReference type="FunFam" id="1.10.10.250:FF:000001">
    <property type="entry name" value="50S ribosomal protein L11"/>
    <property type="match status" value="1"/>
</dbReference>
<dbReference type="FunFam" id="3.30.1550.10:FF:000001">
    <property type="entry name" value="50S ribosomal protein L11"/>
    <property type="match status" value="1"/>
</dbReference>
<dbReference type="Gene3D" id="1.10.10.250">
    <property type="entry name" value="Ribosomal protein L11, C-terminal domain"/>
    <property type="match status" value="1"/>
</dbReference>
<dbReference type="Gene3D" id="3.30.1550.10">
    <property type="entry name" value="Ribosomal protein L11/L12, N-terminal domain"/>
    <property type="match status" value="1"/>
</dbReference>
<dbReference type="HAMAP" id="MF_00736">
    <property type="entry name" value="Ribosomal_uL11"/>
    <property type="match status" value="1"/>
</dbReference>
<dbReference type="InterPro" id="IPR000911">
    <property type="entry name" value="Ribosomal_uL11"/>
</dbReference>
<dbReference type="InterPro" id="IPR006519">
    <property type="entry name" value="Ribosomal_uL11_bac-typ"/>
</dbReference>
<dbReference type="InterPro" id="IPR020783">
    <property type="entry name" value="Ribosomal_uL11_C"/>
</dbReference>
<dbReference type="InterPro" id="IPR036769">
    <property type="entry name" value="Ribosomal_uL11_C_sf"/>
</dbReference>
<dbReference type="InterPro" id="IPR020785">
    <property type="entry name" value="Ribosomal_uL11_CS"/>
</dbReference>
<dbReference type="InterPro" id="IPR020784">
    <property type="entry name" value="Ribosomal_uL11_N"/>
</dbReference>
<dbReference type="InterPro" id="IPR036796">
    <property type="entry name" value="Ribosomal_uL11_N_sf"/>
</dbReference>
<dbReference type="NCBIfam" id="TIGR01632">
    <property type="entry name" value="L11_bact"/>
    <property type="match status" value="1"/>
</dbReference>
<dbReference type="PANTHER" id="PTHR11661">
    <property type="entry name" value="60S RIBOSOMAL PROTEIN L12"/>
    <property type="match status" value="1"/>
</dbReference>
<dbReference type="PANTHER" id="PTHR11661:SF1">
    <property type="entry name" value="LARGE RIBOSOMAL SUBUNIT PROTEIN UL11M"/>
    <property type="match status" value="1"/>
</dbReference>
<dbReference type="Pfam" id="PF00298">
    <property type="entry name" value="Ribosomal_L11"/>
    <property type="match status" value="1"/>
</dbReference>
<dbReference type="Pfam" id="PF03946">
    <property type="entry name" value="Ribosomal_L11_N"/>
    <property type="match status" value="1"/>
</dbReference>
<dbReference type="SMART" id="SM00649">
    <property type="entry name" value="RL11"/>
    <property type="match status" value="1"/>
</dbReference>
<dbReference type="SUPFAM" id="SSF54747">
    <property type="entry name" value="Ribosomal L11/L12e N-terminal domain"/>
    <property type="match status" value="1"/>
</dbReference>
<dbReference type="SUPFAM" id="SSF46906">
    <property type="entry name" value="Ribosomal protein L11, C-terminal domain"/>
    <property type="match status" value="1"/>
</dbReference>
<dbReference type="PROSITE" id="PS00359">
    <property type="entry name" value="RIBOSOMAL_L11"/>
    <property type="match status" value="1"/>
</dbReference>
<sequence>MAKKIVAIIKLALPAGKANPAPPVGPALGQHGVNIMAFCKEYNGKTSDQVGMVIPVEISVFEDRSFTFVLKTPPASVLIRKAAGVERGSNEPNKKNVGSITQDQLREIAQTKMPDLNANDIEAAMKIVAGTARNMGISVKD</sequence>
<accession>B7KJM5</accession>
<feature type="chain" id="PRO_1000195613" description="Large ribosomal subunit protein uL11">
    <location>
        <begin position="1"/>
        <end position="141"/>
    </location>
</feature>
<keyword id="KW-0488">Methylation</keyword>
<keyword id="KW-1185">Reference proteome</keyword>
<keyword id="KW-0687">Ribonucleoprotein</keyword>
<keyword id="KW-0689">Ribosomal protein</keyword>
<keyword id="KW-0694">RNA-binding</keyword>
<keyword id="KW-0699">rRNA-binding</keyword>